<reference key="1">
    <citation type="journal article" date="1998" name="Nature">
        <title>Deciphering the biology of Mycobacterium tuberculosis from the complete genome sequence.</title>
        <authorList>
            <person name="Cole S.T."/>
            <person name="Brosch R."/>
            <person name="Parkhill J."/>
            <person name="Garnier T."/>
            <person name="Churcher C.M."/>
            <person name="Harris D.E."/>
            <person name="Gordon S.V."/>
            <person name="Eiglmeier K."/>
            <person name="Gas S."/>
            <person name="Barry C.E. III"/>
            <person name="Tekaia F."/>
            <person name="Badcock K."/>
            <person name="Basham D."/>
            <person name="Brown D."/>
            <person name="Chillingworth T."/>
            <person name="Connor R."/>
            <person name="Davies R.M."/>
            <person name="Devlin K."/>
            <person name="Feltwell T."/>
            <person name="Gentles S."/>
            <person name="Hamlin N."/>
            <person name="Holroyd S."/>
            <person name="Hornsby T."/>
            <person name="Jagels K."/>
            <person name="Krogh A."/>
            <person name="McLean J."/>
            <person name="Moule S."/>
            <person name="Murphy L.D."/>
            <person name="Oliver S."/>
            <person name="Osborne J."/>
            <person name="Quail M.A."/>
            <person name="Rajandream M.A."/>
            <person name="Rogers J."/>
            <person name="Rutter S."/>
            <person name="Seeger K."/>
            <person name="Skelton S."/>
            <person name="Squares S."/>
            <person name="Squares R."/>
            <person name="Sulston J.E."/>
            <person name="Taylor K."/>
            <person name="Whitehead S."/>
            <person name="Barrell B.G."/>
        </authorList>
    </citation>
    <scope>NUCLEOTIDE SEQUENCE [LARGE SCALE GENOMIC DNA]</scope>
    <source>
        <strain>ATCC 25618 / H37Rv</strain>
    </source>
</reference>
<reference key="2">
    <citation type="journal article" date="2010" name="PLoS ONE">
        <title>Prokaryotic ubiquitin-like protein (Pup) proteome of Mycobacterium tuberculosis.</title>
        <authorList>
            <person name="Festa R.A."/>
            <person name="McAllister F."/>
            <person name="Pearce M.J."/>
            <person name="Mintseris J."/>
            <person name="Burns K.E."/>
            <person name="Gygi S.P."/>
            <person name="Darwin K.H."/>
        </authorList>
    </citation>
    <scope>PUPYLATION AT LYS-292</scope>
    <scope>IDENTIFICATION BY MASS SPECTROMETRY</scope>
    <source>
        <strain>ATCC 25618 / H37Rv</strain>
    </source>
</reference>
<reference key="3">
    <citation type="journal article" date="2011" name="Mol. Cell. Proteomics">
        <title>Proteogenomic analysis of Mycobacterium tuberculosis by high resolution mass spectrometry.</title>
        <authorList>
            <person name="Kelkar D.S."/>
            <person name="Kumar D."/>
            <person name="Kumar P."/>
            <person name="Balakrishnan L."/>
            <person name="Muthusamy B."/>
            <person name="Yadav A.K."/>
            <person name="Shrivastava P."/>
            <person name="Marimuthu A."/>
            <person name="Anand S."/>
            <person name="Sundaram H."/>
            <person name="Kingsbury R."/>
            <person name="Harsha H.C."/>
            <person name="Nair B."/>
            <person name="Prasad T.S."/>
            <person name="Chauhan D.S."/>
            <person name="Katoch K."/>
            <person name="Katoch V.M."/>
            <person name="Kumar P."/>
            <person name="Chaerkady R."/>
            <person name="Ramachandran S."/>
            <person name="Dash D."/>
            <person name="Pandey A."/>
        </authorList>
    </citation>
    <scope>ACETYLATION [LARGE SCALE ANALYSIS] AT PRO-2</scope>
    <scope>CLEAVAGE OF INITIATOR METHIONINE [LARGE SCALE ANALYSIS]</scope>
    <scope>IDENTIFICATION BY MASS SPECTROMETRY [LARGE SCALE ANALYSIS]</scope>
    <source>
        <strain>ATCC 25618 / H37Rv</strain>
    </source>
</reference>
<keyword id="KW-0007">Acetylation</keyword>
<keyword id="KW-0963">Cytoplasm</keyword>
<keyword id="KW-0342">GTP-binding</keyword>
<keyword id="KW-0436">Ligase</keyword>
<keyword id="KW-0460">Magnesium</keyword>
<keyword id="KW-0479">Metal-binding</keyword>
<keyword id="KW-0547">Nucleotide-binding</keyword>
<keyword id="KW-0658">Purine biosynthesis</keyword>
<keyword id="KW-1185">Reference proteome</keyword>
<accession>P9WHN3</accession>
<accession>L0T6F4</accession>
<accession>O08381</accession>
<accession>P65880</accession>
<proteinExistence type="evidence at protein level"/>
<evidence type="ECO:0000255" key="1">
    <source>
        <dbReference type="HAMAP-Rule" id="MF_00011"/>
    </source>
</evidence>
<evidence type="ECO:0007744" key="2">
    <source>
    </source>
</evidence>
<organism>
    <name type="scientific">Mycobacterium tuberculosis (strain ATCC 25618 / H37Rv)</name>
    <dbReference type="NCBI Taxonomy" id="83332"/>
    <lineage>
        <taxon>Bacteria</taxon>
        <taxon>Bacillati</taxon>
        <taxon>Actinomycetota</taxon>
        <taxon>Actinomycetes</taxon>
        <taxon>Mycobacteriales</taxon>
        <taxon>Mycobacteriaceae</taxon>
        <taxon>Mycobacterium</taxon>
        <taxon>Mycobacterium tuberculosis complex</taxon>
    </lineage>
</organism>
<sequence>MPAIVLIGAQWGDEGKGKATDLLGGRVQWVVRYQGGNNAGHTVVLPTGENFALHLIPSGVLTPGVTNVIGNGVVIDPGVLLNELRGLQDRGVDTAKLLISADAHLLMPYHIAIDKVTERYMGSKKIGTTGRGIGPCYQDKIARIGIRVADVLDPEQLTHKVEAACEFKNQVLVKIYNRKALDPAQVVDALLEQAEGFKHRIADTRLLLNAALEAGETVLLEGSQGTLLDVDHGTYPYVTSSNPTAGGAAVGSGIGPTRIGTVLGILKAYTTRVGSGPFPTELFDEHGEYLSKTGREFGVTTGRRRRCGWFDAVIARYAARVNGITDYFLTKLDVLSSLESVPVCVGYEIDGRRTRDMPMTQRDLCRAKPVYEELPGWWEDISGAREFDDLPAKARDYVLRLEQLAGAPVSCIGVGPGREQTIVRRDVLQDRP</sequence>
<feature type="initiator methionine" description="Removed" evidence="2">
    <location>
        <position position="1"/>
    </location>
</feature>
<feature type="chain" id="PRO_0000095199" description="Adenylosuccinate synthetase">
    <location>
        <begin position="2"/>
        <end position="432"/>
    </location>
</feature>
<feature type="active site" description="Proton acceptor" evidence="1">
    <location>
        <position position="13"/>
    </location>
</feature>
<feature type="active site" description="Proton donor" evidence="1">
    <location>
        <position position="41"/>
    </location>
</feature>
<feature type="binding site" evidence="1">
    <location>
        <begin position="12"/>
        <end position="18"/>
    </location>
    <ligand>
        <name>GTP</name>
        <dbReference type="ChEBI" id="CHEBI:37565"/>
    </ligand>
</feature>
<feature type="binding site" description="in other chain" evidence="1">
    <location>
        <begin position="13"/>
        <end position="16"/>
    </location>
    <ligand>
        <name>IMP</name>
        <dbReference type="ChEBI" id="CHEBI:58053"/>
        <note>ligand shared between dimeric partners</note>
    </ligand>
</feature>
<feature type="binding site" evidence="1">
    <location>
        <position position="13"/>
    </location>
    <ligand>
        <name>Mg(2+)</name>
        <dbReference type="ChEBI" id="CHEBI:18420"/>
    </ligand>
</feature>
<feature type="binding site" description="in other chain" evidence="1">
    <location>
        <begin position="38"/>
        <end position="41"/>
    </location>
    <ligand>
        <name>IMP</name>
        <dbReference type="ChEBI" id="CHEBI:58053"/>
        <note>ligand shared between dimeric partners</note>
    </ligand>
</feature>
<feature type="binding site" evidence="1">
    <location>
        <begin position="40"/>
        <end position="42"/>
    </location>
    <ligand>
        <name>GTP</name>
        <dbReference type="ChEBI" id="CHEBI:37565"/>
    </ligand>
</feature>
<feature type="binding site" evidence="1">
    <location>
        <position position="40"/>
    </location>
    <ligand>
        <name>Mg(2+)</name>
        <dbReference type="ChEBI" id="CHEBI:18420"/>
    </ligand>
</feature>
<feature type="binding site" description="in other chain" evidence="1">
    <location>
        <position position="129"/>
    </location>
    <ligand>
        <name>IMP</name>
        <dbReference type="ChEBI" id="CHEBI:58053"/>
        <note>ligand shared between dimeric partners</note>
    </ligand>
</feature>
<feature type="binding site" evidence="1">
    <location>
        <position position="143"/>
    </location>
    <ligand>
        <name>IMP</name>
        <dbReference type="ChEBI" id="CHEBI:58053"/>
        <note>ligand shared between dimeric partners</note>
    </ligand>
</feature>
<feature type="binding site" description="in other chain" evidence="1">
    <location>
        <position position="224"/>
    </location>
    <ligand>
        <name>IMP</name>
        <dbReference type="ChEBI" id="CHEBI:58053"/>
        <note>ligand shared between dimeric partners</note>
    </ligand>
</feature>
<feature type="binding site" description="in other chain" evidence="1">
    <location>
        <position position="239"/>
    </location>
    <ligand>
        <name>IMP</name>
        <dbReference type="ChEBI" id="CHEBI:58053"/>
        <note>ligand shared between dimeric partners</note>
    </ligand>
</feature>
<feature type="binding site" evidence="1">
    <location>
        <begin position="299"/>
        <end position="305"/>
    </location>
    <ligand>
        <name>substrate</name>
    </ligand>
</feature>
<feature type="binding site" description="in other chain" evidence="1">
    <location>
        <position position="303"/>
    </location>
    <ligand>
        <name>IMP</name>
        <dbReference type="ChEBI" id="CHEBI:58053"/>
        <note>ligand shared between dimeric partners</note>
    </ligand>
</feature>
<feature type="binding site" evidence="1">
    <location>
        <position position="305"/>
    </location>
    <ligand>
        <name>GTP</name>
        <dbReference type="ChEBI" id="CHEBI:37565"/>
    </ligand>
</feature>
<feature type="binding site" evidence="1">
    <location>
        <begin position="331"/>
        <end position="333"/>
    </location>
    <ligand>
        <name>GTP</name>
        <dbReference type="ChEBI" id="CHEBI:37565"/>
    </ligand>
</feature>
<feature type="binding site" evidence="1">
    <location>
        <begin position="413"/>
        <end position="415"/>
    </location>
    <ligand>
        <name>GTP</name>
        <dbReference type="ChEBI" id="CHEBI:37565"/>
    </ligand>
</feature>
<feature type="modified residue" description="N-acetylproline" evidence="2">
    <location>
        <position position="2"/>
    </location>
</feature>
<name>PURA_MYCTU</name>
<protein>
    <recommendedName>
        <fullName evidence="1">Adenylosuccinate synthetase</fullName>
        <shortName evidence="1">AMPSase</shortName>
        <shortName evidence="1">AdSS</shortName>
        <ecNumber evidence="1">6.3.4.4</ecNumber>
    </recommendedName>
    <alternativeName>
        <fullName evidence="1">IMP--aspartate ligase</fullName>
    </alternativeName>
</protein>
<comment type="function">
    <text evidence="1">Plays an important role in the de novo pathway of purine nucleotide biosynthesis. Catalyzes the first committed step in the biosynthesis of AMP from IMP.</text>
</comment>
<comment type="catalytic activity">
    <reaction evidence="1">
        <text>IMP + L-aspartate + GTP = N(6)-(1,2-dicarboxyethyl)-AMP + GDP + phosphate + 2 H(+)</text>
        <dbReference type="Rhea" id="RHEA:15753"/>
        <dbReference type="ChEBI" id="CHEBI:15378"/>
        <dbReference type="ChEBI" id="CHEBI:29991"/>
        <dbReference type="ChEBI" id="CHEBI:37565"/>
        <dbReference type="ChEBI" id="CHEBI:43474"/>
        <dbReference type="ChEBI" id="CHEBI:57567"/>
        <dbReference type="ChEBI" id="CHEBI:58053"/>
        <dbReference type="ChEBI" id="CHEBI:58189"/>
        <dbReference type="EC" id="6.3.4.4"/>
    </reaction>
</comment>
<comment type="cofactor">
    <cofactor evidence="1">
        <name>Mg(2+)</name>
        <dbReference type="ChEBI" id="CHEBI:18420"/>
    </cofactor>
    <text evidence="1">Binds 1 Mg(2+) ion per subunit.</text>
</comment>
<comment type="pathway">
    <text evidence="1">Purine metabolism; AMP biosynthesis via de novo pathway; AMP from IMP: step 1/2.</text>
</comment>
<comment type="subunit">
    <text evidence="1">Homodimer.</text>
</comment>
<comment type="subcellular location">
    <subcellularLocation>
        <location evidence="1">Cytoplasm</location>
    </subcellularLocation>
</comment>
<comment type="similarity">
    <text evidence="1">Belongs to the adenylosuccinate synthetase family.</text>
</comment>
<dbReference type="EC" id="6.3.4.4" evidence="1"/>
<dbReference type="EMBL" id="AL123456">
    <property type="protein sequence ID" value="CCP43087.1"/>
    <property type="molecule type" value="Genomic_DNA"/>
</dbReference>
<dbReference type="PIR" id="F70575">
    <property type="entry name" value="F70575"/>
</dbReference>
<dbReference type="RefSeq" id="NP_214871.1">
    <property type="nucleotide sequence ID" value="NC_000962.3"/>
</dbReference>
<dbReference type="RefSeq" id="WP_003401829.1">
    <property type="nucleotide sequence ID" value="NZ_NVQJ01000002.1"/>
</dbReference>
<dbReference type="SMR" id="P9WHN3"/>
<dbReference type="FunCoup" id="P9WHN3">
    <property type="interactions" value="558"/>
</dbReference>
<dbReference type="STRING" id="83332.Rv0357c"/>
<dbReference type="iPTMnet" id="P9WHN3"/>
<dbReference type="PaxDb" id="83332-Rv0357c"/>
<dbReference type="DNASU" id="886484"/>
<dbReference type="GeneID" id="886484"/>
<dbReference type="KEGG" id="mtu:Rv0357c"/>
<dbReference type="KEGG" id="mtv:RVBD_0357c"/>
<dbReference type="TubercuList" id="Rv0357c"/>
<dbReference type="eggNOG" id="COG0104">
    <property type="taxonomic scope" value="Bacteria"/>
</dbReference>
<dbReference type="InParanoid" id="P9WHN3"/>
<dbReference type="OrthoDB" id="9807553at2"/>
<dbReference type="PhylomeDB" id="P9WHN3"/>
<dbReference type="UniPathway" id="UPA00075">
    <property type="reaction ID" value="UER00335"/>
</dbReference>
<dbReference type="Proteomes" id="UP000001584">
    <property type="component" value="Chromosome"/>
</dbReference>
<dbReference type="GO" id="GO:0005737">
    <property type="term" value="C:cytoplasm"/>
    <property type="evidence" value="ECO:0000318"/>
    <property type="project" value="GO_Central"/>
</dbReference>
<dbReference type="GO" id="GO:0004019">
    <property type="term" value="F:adenylosuccinate synthase activity"/>
    <property type="evidence" value="ECO:0000318"/>
    <property type="project" value="GO_Central"/>
</dbReference>
<dbReference type="GO" id="GO:0005525">
    <property type="term" value="F:GTP binding"/>
    <property type="evidence" value="ECO:0007669"/>
    <property type="project" value="UniProtKB-UniRule"/>
</dbReference>
<dbReference type="GO" id="GO:0000287">
    <property type="term" value="F:magnesium ion binding"/>
    <property type="evidence" value="ECO:0007669"/>
    <property type="project" value="UniProtKB-UniRule"/>
</dbReference>
<dbReference type="GO" id="GO:0044208">
    <property type="term" value="P:'de novo' AMP biosynthetic process"/>
    <property type="evidence" value="ECO:0000318"/>
    <property type="project" value="GO_Central"/>
</dbReference>
<dbReference type="GO" id="GO:0046040">
    <property type="term" value="P:IMP metabolic process"/>
    <property type="evidence" value="ECO:0000318"/>
    <property type="project" value="GO_Central"/>
</dbReference>
<dbReference type="CDD" id="cd03108">
    <property type="entry name" value="AdSS"/>
    <property type="match status" value="1"/>
</dbReference>
<dbReference type="FunFam" id="1.10.300.10:FF:000001">
    <property type="entry name" value="Adenylosuccinate synthetase"/>
    <property type="match status" value="1"/>
</dbReference>
<dbReference type="FunFam" id="3.90.170.10:FF:000001">
    <property type="entry name" value="Adenylosuccinate synthetase"/>
    <property type="match status" value="1"/>
</dbReference>
<dbReference type="Gene3D" id="3.40.440.10">
    <property type="entry name" value="Adenylosuccinate Synthetase, subunit A, domain 1"/>
    <property type="match status" value="1"/>
</dbReference>
<dbReference type="Gene3D" id="1.10.300.10">
    <property type="entry name" value="Adenylosuccinate Synthetase, subunit A, domain 2"/>
    <property type="match status" value="1"/>
</dbReference>
<dbReference type="Gene3D" id="3.90.170.10">
    <property type="entry name" value="Adenylosuccinate Synthetase, subunit A, domain 3"/>
    <property type="match status" value="1"/>
</dbReference>
<dbReference type="HAMAP" id="MF_00011">
    <property type="entry name" value="Adenylosucc_synth"/>
    <property type="match status" value="1"/>
</dbReference>
<dbReference type="InterPro" id="IPR018220">
    <property type="entry name" value="Adenylosuccin_syn_GTP-bd"/>
</dbReference>
<dbReference type="InterPro" id="IPR033128">
    <property type="entry name" value="Adenylosuccin_syn_Lys_AS"/>
</dbReference>
<dbReference type="InterPro" id="IPR042109">
    <property type="entry name" value="Adenylosuccinate_synth_dom1"/>
</dbReference>
<dbReference type="InterPro" id="IPR042110">
    <property type="entry name" value="Adenylosuccinate_synth_dom2"/>
</dbReference>
<dbReference type="InterPro" id="IPR042111">
    <property type="entry name" value="Adenylosuccinate_synth_dom3"/>
</dbReference>
<dbReference type="InterPro" id="IPR001114">
    <property type="entry name" value="Adenylosuccinate_synthetase"/>
</dbReference>
<dbReference type="InterPro" id="IPR027417">
    <property type="entry name" value="P-loop_NTPase"/>
</dbReference>
<dbReference type="NCBIfam" id="NF002223">
    <property type="entry name" value="PRK01117.1"/>
    <property type="match status" value="1"/>
</dbReference>
<dbReference type="NCBIfam" id="TIGR00184">
    <property type="entry name" value="purA"/>
    <property type="match status" value="1"/>
</dbReference>
<dbReference type="PANTHER" id="PTHR11846">
    <property type="entry name" value="ADENYLOSUCCINATE SYNTHETASE"/>
    <property type="match status" value="1"/>
</dbReference>
<dbReference type="PANTHER" id="PTHR11846:SF0">
    <property type="entry name" value="ADENYLOSUCCINATE SYNTHETASE"/>
    <property type="match status" value="1"/>
</dbReference>
<dbReference type="Pfam" id="PF00709">
    <property type="entry name" value="Adenylsucc_synt"/>
    <property type="match status" value="1"/>
</dbReference>
<dbReference type="SMART" id="SM00788">
    <property type="entry name" value="Adenylsucc_synt"/>
    <property type="match status" value="1"/>
</dbReference>
<dbReference type="SUPFAM" id="SSF52540">
    <property type="entry name" value="P-loop containing nucleoside triphosphate hydrolases"/>
    <property type="match status" value="1"/>
</dbReference>
<dbReference type="PROSITE" id="PS01266">
    <property type="entry name" value="ADENYLOSUCCIN_SYN_1"/>
    <property type="match status" value="1"/>
</dbReference>
<dbReference type="PROSITE" id="PS00513">
    <property type="entry name" value="ADENYLOSUCCIN_SYN_2"/>
    <property type="match status" value="1"/>
</dbReference>
<gene>
    <name evidence="1" type="primary">purA</name>
    <name type="ordered locus">Rv0357c</name>
    <name type="ORF">MTCY13E10.19c</name>
</gene>